<comment type="function">
    <text evidence="2 4">Catalyzes ghrelin acylation at 'Ser-3' using preferentially octanoyl-CoA, hexanoyl-CoA and decanoyl-CoA as acyl-CoA donors leading to ghrelin activity (By similarity) (PubMed:18443287). In vitro uses also acyl-CoA donors of different lengths from short-chain (C2) to long-chain fatty acids (C16) knowing that acyl-CoA donors from butanoyl-CoA (C4) to dodecanoyl-CoA (C12) are more efficient compared to longer acyl-CoA donors, such as myristoyl-CoA (C14) and palmitoyl-CoA (C16) that are not efficient (By similarity).</text>
</comment>
<comment type="catalytic activity">
    <reaction evidence="4">
        <text>octanoyl-CoA + L-seryl-[protein] = O-octanoyl-L-seryl-[protein] + CoA</text>
        <dbReference type="Rhea" id="RHEA:59964"/>
        <dbReference type="Rhea" id="RHEA-COMP:9863"/>
        <dbReference type="Rhea" id="RHEA-COMP:15484"/>
        <dbReference type="ChEBI" id="CHEBI:29999"/>
        <dbReference type="ChEBI" id="CHEBI:57287"/>
        <dbReference type="ChEBI" id="CHEBI:57386"/>
        <dbReference type="ChEBI" id="CHEBI:143548"/>
    </reaction>
    <physiologicalReaction direction="left-to-right" evidence="4">
        <dbReference type="Rhea" id="RHEA:59965"/>
    </physiologicalReaction>
</comment>
<comment type="catalytic activity">
    <reaction evidence="2">
        <text>decanoyl-CoA + L-seryl-[protein] = O-decanoyl-L-seryl-[protein] + CoA</text>
        <dbReference type="Rhea" id="RHEA:59972"/>
        <dbReference type="Rhea" id="RHEA-COMP:9863"/>
        <dbReference type="Rhea" id="RHEA-COMP:15486"/>
        <dbReference type="ChEBI" id="CHEBI:29999"/>
        <dbReference type="ChEBI" id="CHEBI:57287"/>
        <dbReference type="ChEBI" id="CHEBI:61430"/>
        <dbReference type="ChEBI" id="CHEBI:143549"/>
    </reaction>
    <physiologicalReaction direction="left-to-right" evidence="2">
        <dbReference type="Rhea" id="RHEA:59973"/>
    </physiologicalReaction>
</comment>
<comment type="catalytic activity">
    <reaction evidence="2">
        <text>L-seryl-[protein] + acetyl-CoA = O-acetyl-L-seryl-[protein] + CoA</text>
        <dbReference type="Rhea" id="RHEA:59392"/>
        <dbReference type="Rhea" id="RHEA-COMP:9863"/>
        <dbReference type="Rhea" id="RHEA-COMP:15352"/>
        <dbReference type="ChEBI" id="CHEBI:29999"/>
        <dbReference type="ChEBI" id="CHEBI:57287"/>
        <dbReference type="ChEBI" id="CHEBI:57288"/>
        <dbReference type="ChEBI" id="CHEBI:141128"/>
    </reaction>
    <physiologicalReaction direction="left-to-right" evidence="2">
        <dbReference type="Rhea" id="RHEA:59393"/>
    </physiologicalReaction>
</comment>
<comment type="catalytic activity">
    <reaction evidence="2">
        <text>L-seryl-[protein] + butanoyl-CoA = O-butanoyl-L-seryl-[protein] + CoA</text>
        <dbReference type="Rhea" id="RHEA:68276"/>
        <dbReference type="Rhea" id="RHEA-COMP:9863"/>
        <dbReference type="Rhea" id="RHEA-COMP:17461"/>
        <dbReference type="ChEBI" id="CHEBI:29999"/>
        <dbReference type="ChEBI" id="CHEBI:57287"/>
        <dbReference type="ChEBI" id="CHEBI:57371"/>
        <dbReference type="ChEBI" id="CHEBI:177287"/>
    </reaction>
    <physiologicalReaction direction="left-to-right" evidence="2">
        <dbReference type="Rhea" id="RHEA:68277"/>
    </physiologicalReaction>
</comment>
<comment type="catalytic activity">
    <reaction evidence="2">
        <text>pentanoyl-CoA + L-seryl-[protein] = O-pentanoyl-L-seryl-[protein] + CoA</text>
        <dbReference type="Rhea" id="RHEA:68280"/>
        <dbReference type="Rhea" id="RHEA-COMP:9863"/>
        <dbReference type="Rhea" id="RHEA-COMP:17462"/>
        <dbReference type="ChEBI" id="CHEBI:29999"/>
        <dbReference type="ChEBI" id="CHEBI:57287"/>
        <dbReference type="ChEBI" id="CHEBI:57389"/>
        <dbReference type="ChEBI" id="CHEBI:177288"/>
    </reaction>
    <physiologicalReaction direction="left-to-right" evidence="2">
        <dbReference type="Rhea" id="RHEA:68281"/>
    </physiologicalReaction>
</comment>
<comment type="catalytic activity">
    <reaction evidence="2">
        <text>hexanoyl-CoA + L-seryl-[protein] = O-hexanoyl-L-seryl-[protein] + CoA</text>
        <dbReference type="Rhea" id="RHEA:68284"/>
        <dbReference type="Rhea" id="RHEA-COMP:9863"/>
        <dbReference type="Rhea" id="RHEA-COMP:17463"/>
        <dbReference type="ChEBI" id="CHEBI:29999"/>
        <dbReference type="ChEBI" id="CHEBI:57287"/>
        <dbReference type="ChEBI" id="CHEBI:62620"/>
        <dbReference type="ChEBI" id="CHEBI:177289"/>
    </reaction>
    <physiologicalReaction direction="left-to-right" evidence="2">
        <dbReference type="Rhea" id="RHEA:68285"/>
    </physiologicalReaction>
</comment>
<comment type="catalytic activity">
    <reaction evidence="2">
        <text>heptanoyl-CoA + L-seryl-[protein] = O-heptanoyl-L-seryl-[protein] + CoA</text>
        <dbReference type="Rhea" id="RHEA:68288"/>
        <dbReference type="Rhea" id="RHEA-COMP:9863"/>
        <dbReference type="Rhea" id="RHEA-COMP:17464"/>
        <dbReference type="ChEBI" id="CHEBI:29999"/>
        <dbReference type="ChEBI" id="CHEBI:57287"/>
        <dbReference type="ChEBI" id="CHEBI:78811"/>
        <dbReference type="ChEBI" id="CHEBI:177290"/>
    </reaction>
    <physiologicalReaction direction="left-to-right" evidence="2">
        <dbReference type="Rhea" id="RHEA:68289"/>
    </physiologicalReaction>
</comment>
<comment type="catalytic activity">
    <reaction evidence="2">
        <text>nonanoyl-CoA + L-seryl-[protein] = O-nonanoyl-L-seryl-[protein] + CoA</text>
        <dbReference type="Rhea" id="RHEA:68292"/>
        <dbReference type="Rhea" id="RHEA-COMP:9863"/>
        <dbReference type="Rhea" id="RHEA-COMP:17465"/>
        <dbReference type="ChEBI" id="CHEBI:29999"/>
        <dbReference type="ChEBI" id="CHEBI:57287"/>
        <dbReference type="ChEBI" id="CHEBI:76291"/>
        <dbReference type="ChEBI" id="CHEBI:177291"/>
    </reaction>
    <physiologicalReaction direction="left-to-right" evidence="2">
        <dbReference type="Rhea" id="RHEA:68293"/>
    </physiologicalReaction>
</comment>
<comment type="catalytic activity">
    <reaction evidence="2">
        <text>L-seryl-[protein] + dodecanoyl-CoA = O-dodecanoyl-L-seryl-[protein] + CoA</text>
        <dbReference type="Rhea" id="RHEA:68296"/>
        <dbReference type="Rhea" id="RHEA-COMP:9863"/>
        <dbReference type="Rhea" id="RHEA-COMP:17466"/>
        <dbReference type="ChEBI" id="CHEBI:29999"/>
        <dbReference type="ChEBI" id="CHEBI:57287"/>
        <dbReference type="ChEBI" id="CHEBI:57375"/>
        <dbReference type="ChEBI" id="CHEBI:177292"/>
    </reaction>
    <physiologicalReaction direction="left-to-right" evidence="2">
        <dbReference type="Rhea" id="RHEA:68297"/>
    </physiologicalReaction>
</comment>
<comment type="catalytic activity">
    <reaction evidence="2">
        <text>L-seryl-[protein] + tetradecanoyl-CoA = O-tetradecanoyl-L-seryl-[protein] + CoA</text>
        <dbReference type="Rhea" id="RHEA:68300"/>
        <dbReference type="Rhea" id="RHEA-COMP:9863"/>
        <dbReference type="Rhea" id="RHEA-COMP:17467"/>
        <dbReference type="ChEBI" id="CHEBI:29999"/>
        <dbReference type="ChEBI" id="CHEBI:57287"/>
        <dbReference type="ChEBI" id="CHEBI:57385"/>
        <dbReference type="ChEBI" id="CHEBI:177293"/>
    </reaction>
    <physiologicalReaction direction="left-to-right" evidence="2">
        <dbReference type="Rhea" id="RHEA:68301"/>
    </physiologicalReaction>
</comment>
<comment type="catalytic activity">
    <reaction evidence="2">
        <text>a fatty acyl-CoA + L-seryl-[protein] = O-fatty acyl-L-seryl-[protein] + CoA</text>
        <dbReference type="Rhea" id="RHEA:68272"/>
        <dbReference type="Rhea" id="RHEA-COMP:9863"/>
        <dbReference type="Rhea" id="RHEA-COMP:17460"/>
        <dbReference type="ChEBI" id="CHEBI:29999"/>
        <dbReference type="ChEBI" id="CHEBI:57287"/>
        <dbReference type="ChEBI" id="CHEBI:77636"/>
        <dbReference type="ChEBI" id="CHEBI:177286"/>
    </reaction>
    <physiologicalReaction direction="left-to-right" evidence="2">
        <dbReference type="Rhea" id="RHEA:68273"/>
    </physiologicalReaction>
</comment>
<comment type="subunit">
    <text evidence="1">Monomer.</text>
</comment>
<comment type="subcellular location">
    <subcellularLocation>
        <location evidence="1">Endoplasmic reticulum membrane</location>
        <topology evidence="1">Multi-pass membrane protein</topology>
    </subcellularLocation>
</comment>
<comment type="PTM">
    <text evidence="1">Not glycosylated.</text>
</comment>
<comment type="similarity">
    <text evidence="3">Belongs to the membrane-bound acyltransferase family.</text>
</comment>
<keyword id="KW-0012">Acyltransferase</keyword>
<keyword id="KW-0256">Endoplasmic reticulum</keyword>
<keyword id="KW-0472">Membrane</keyword>
<keyword id="KW-1185">Reference proteome</keyword>
<keyword id="KW-0808">Transferase</keyword>
<keyword id="KW-0812">Transmembrane</keyword>
<keyword id="KW-1133">Transmembrane helix</keyword>
<gene>
    <name evidence="7" type="primary">mboat4</name>
    <name evidence="5" type="synonym">goat</name>
</gene>
<reference evidence="6 7" key="1">
    <citation type="journal article" date="2008" name="Proc. Natl. Acad. Sci. U.S.A.">
        <title>Ghrelin octanoylation mediated by an orphan lipid transferase.</title>
        <authorList>
            <person name="Gutierrez J.A."/>
            <person name="Solenberg P.J."/>
            <person name="Perkins D.R."/>
            <person name="Willency J.A."/>
            <person name="Knierman M.D."/>
            <person name="Jin Z."/>
            <person name="Witcher D.R."/>
            <person name="Luo S."/>
            <person name="Onyia J.E."/>
            <person name="Hale J.E."/>
        </authorList>
    </citation>
    <scope>NUCLEOTIDE SEQUENCE [MRNA]</scope>
    <scope>FUNCTION</scope>
    <scope>CATALYTIC ACTIVITY</scope>
</reference>
<organism>
    <name type="scientific">Danio rerio</name>
    <name type="common">Zebrafish</name>
    <name type="synonym">Brachydanio rerio</name>
    <dbReference type="NCBI Taxonomy" id="7955"/>
    <lineage>
        <taxon>Eukaryota</taxon>
        <taxon>Metazoa</taxon>
        <taxon>Chordata</taxon>
        <taxon>Craniata</taxon>
        <taxon>Vertebrata</taxon>
        <taxon>Euteleostomi</taxon>
        <taxon>Actinopterygii</taxon>
        <taxon>Neopterygii</taxon>
        <taxon>Teleostei</taxon>
        <taxon>Ostariophysi</taxon>
        <taxon>Cypriniformes</taxon>
        <taxon>Danionidae</taxon>
        <taxon>Danioninae</taxon>
        <taxon>Danio</taxon>
    </lineage>
</organism>
<name>MBOA4_DANRE</name>
<accession>B1Q006</accession>
<feature type="chain" id="PRO_0000347278" description="Membrane-bound ghrelin O-acyltransferase mboat4">
    <location>
        <begin position="1"/>
        <end position="415"/>
    </location>
</feature>
<feature type="topological domain" description="Lumenal" evidence="6">
    <location>
        <begin position="1"/>
        <end position="6"/>
    </location>
</feature>
<feature type="transmembrane region" description="Helical" evidence="1 3">
    <location>
        <begin position="7"/>
        <end position="28"/>
    </location>
</feature>
<feature type="topological domain" description="Cytoplasmic" evidence="6">
    <location>
        <begin position="29"/>
        <end position="42"/>
    </location>
</feature>
<feature type="transmembrane region" description="Helical" evidence="1 3">
    <location>
        <begin position="43"/>
        <end position="58"/>
    </location>
</feature>
<feature type="topological domain" description="Lumenal" evidence="6">
    <location>
        <begin position="59"/>
        <end position="61"/>
    </location>
</feature>
<feature type="transmembrane region" description="Helical" evidence="1">
    <location>
        <begin position="62"/>
        <end position="78"/>
    </location>
</feature>
<feature type="topological domain" description="Cytoplasmic" evidence="6">
    <location>
        <begin position="79"/>
        <end position="84"/>
    </location>
</feature>
<feature type="transmembrane region" description="Helical" evidence="1">
    <location>
        <begin position="85"/>
        <end position="103"/>
    </location>
</feature>
<feature type="topological domain" description="Lumenal" evidence="6">
    <location>
        <begin position="104"/>
        <end position="122"/>
    </location>
</feature>
<feature type="transmembrane region" description="Helical" evidence="1">
    <location>
        <begin position="123"/>
        <end position="138"/>
    </location>
</feature>
<feature type="topological domain" description="Cytoplasmic" evidence="6">
    <location>
        <begin position="139"/>
        <end position="193"/>
    </location>
</feature>
<feature type="transmembrane region" description="Helical" evidence="1">
    <location>
        <begin position="194"/>
        <end position="214"/>
    </location>
</feature>
<feature type="topological domain" description="Lumenal" evidence="6">
    <location>
        <begin position="215"/>
        <end position="227"/>
    </location>
</feature>
<feature type="transmembrane region" description="Helical" evidence="1 3">
    <location>
        <begin position="228"/>
        <end position="247"/>
    </location>
</feature>
<feature type="topological domain" description="Cytoplasmic" evidence="6">
    <location>
        <begin position="248"/>
        <end position="312"/>
    </location>
</feature>
<feature type="transmembrane region" description="Helical" evidence="1">
    <location>
        <begin position="313"/>
        <end position="326"/>
    </location>
</feature>
<feature type="topological domain" description="Lumenal" evidence="6">
    <location>
        <begin position="327"/>
        <end position="328"/>
    </location>
</feature>
<feature type="transmembrane region" description="Helical" evidence="1">
    <location>
        <begin position="329"/>
        <end position="345"/>
    </location>
</feature>
<feature type="topological domain" description="Cytoplasmic" evidence="6">
    <location>
        <begin position="346"/>
        <end position="364"/>
    </location>
</feature>
<feature type="transmembrane region" description="Helical" evidence="3">
    <location>
        <begin position="365"/>
        <end position="385"/>
    </location>
</feature>
<feature type="topological domain" description="Lumenal" evidence="6">
    <location>
        <begin position="386"/>
        <end position="394"/>
    </location>
</feature>
<feature type="transmembrane region" description="Helical" evidence="3">
    <location>
        <begin position="395"/>
        <end position="415"/>
    </location>
</feature>
<feature type="active site" evidence="1">
    <location>
        <position position="295"/>
    </location>
</feature>
<feature type="active site" evidence="1">
    <location>
        <position position="326"/>
    </location>
</feature>
<dbReference type="EC" id="2.3.1.-" evidence="4"/>
<dbReference type="EMBL" id="EU518498">
    <property type="protein sequence ID" value="ACB05876.1"/>
    <property type="molecule type" value="mRNA"/>
</dbReference>
<dbReference type="RefSeq" id="NP_001116416.1">
    <property type="nucleotide sequence ID" value="NM_001122944.1"/>
</dbReference>
<dbReference type="SMR" id="B1Q006"/>
<dbReference type="FunCoup" id="B1Q006">
    <property type="interactions" value="423"/>
</dbReference>
<dbReference type="STRING" id="7955.ENSDARP00000068385"/>
<dbReference type="SwissLipids" id="SLP:000001959"/>
<dbReference type="PaxDb" id="7955-ENSDARP00000068385"/>
<dbReference type="GeneID" id="795709"/>
<dbReference type="KEGG" id="dre:795709"/>
<dbReference type="AGR" id="ZFIN:ZDB-GENE-090421-3"/>
<dbReference type="CTD" id="619373"/>
<dbReference type="ZFIN" id="ZDB-GENE-090421-3">
    <property type="gene designation" value="mboat4"/>
</dbReference>
<dbReference type="eggNOG" id="KOG2704">
    <property type="taxonomic scope" value="Eukaryota"/>
</dbReference>
<dbReference type="InParanoid" id="B1Q006"/>
<dbReference type="OrthoDB" id="286734at2759"/>
<dbReference type="PhylomeDB" id="B1Q006"/>
<dbReference type="Reactome" id="R-DRE-422085">
    <property type="pathway name" value="Synthesis, secretion, and deacylation of Ghrelin"/>
</dbReference>
<dbReference type="PRO" id="PR:B1Q006"/>
<dbReference type="Proteomes" id="UP000000437">
    <property type="component" value="Chromosome 5"/>
</dbReference>
<dbReference type="GO" id="GO:0005783">
    <property type="term" value="C:endoplasmic reticulum"/>
    <property type="evidence" value="ECO:0000250"/>
    <property type="project" value="UniProtKB"/>
</dbReference>
<dbReference type="GO" id="GO:0005789">
    <property type="term" value="C:endoplasmic reticulum membrane"/>
    <property type="evidence" value="ECO:0000250"/>
    <property type="project" value="UniProtKB"/>
</dbReference>
<dbReference type="GO" id="GO:0016412">
    <property type="term" value="F:serine O-acyltransferase activity"/>
    <property type="evidence" value="ECO:0000314"/>
    <property type="project" value="UniProtKB"/>
</dbReference>
<dbReference type="GO" id="GO:0030258">
    <property type="term" value="P:lipid modification"/>
    <property type="evidence" value="ECO:0000318"/>
    <property type="project" value="GO_Central"/>
</dbReference>
<dbReference type="GO" id="GO:0018191">
    <property type="term" value="P:peptidyl-serine octanoylation"/>
    <property type="evidence" value="ECO:0000314"/>
    <property type="project" value="UniProtKB"/>
</dbReference>
<dbReference type="GO" id="GO:0032094">
    <property type="term" value="P:response to food"/>
    <property type="evidence" value="ECO:0000314"/>
    <property type="project" value="ZFIN"/>
</dbReference>
<dbReference type="InterPro" id="IPR049941">
    <property type="entry name" value="LPLAT_7/PORCN-like"/>
</dbReference>
<dbReference type="InterPro" id="IPR004299">
    <property type="entry name" value="MBOAT_fam"/>
</dbReference>
<dbReference type="PANTHER" id="PTHR13906:SF3">
    <property type="entry name" value="GHRELIN O-ACYLTRANSFERASE"/>
    <property type="match status" value="1"/>
</dbReference>
<dbReference type="PANTHER" id="PTHR13906">
    <property type="entry name" value="PORCUPINE"/>
    <property type="match status" value="1"/>
</dbReference>
<dbReference type="Pfam" id="PF03062">
    <property type="entry name" value="MBOAT"/>
    <property type="match status" value="1"/>
</dbReference>
<evidence type="ECO:0000250" key="1">
    <source>
        <dbReference type="UniProtKB" id="P0C7A3"/>
    </source>
</evidence>
<evidence type="ECO:0000250" key="2">
    <source>
        <dbReference type="UniProtKB" id="Q96T53"/>
    </source>
</evidence>
<evidence type="ECO:0000255" key="3"/>
<evidence type="ECO:0000269" key="4">
    <source>
    </source>
</evidence>
<evidence type="ECO:0000303" key="5">
    <source>
    </source>
</evidence>
<evidence type="ECO:0000305" key="6"/>
<evidence type="ECO:0000312" key="7">
    <source>
        <dbReference type="EMBL" id="ACB05876.1"/>
    </source>
</evidence>
<proteinExistence type="evidence at protein level"/>
<protein>
    <recommendedName>
        <fullName evidence="2">Membrane-bound ghrelin O-acyltransferase mboat4</fullName>
        <ecNumber evidence="4">2.3.1.-</ecNumber>
    </recommendedName>
    <alternativeName>
        <fullName evidence="2">Membrane-bound O-acyltransferase domain-containing protein 4</fullName>
    </alternativeName>
</protein>
<sequence length="415" mass="47626">MIDLLWISSDGHPQLFYQFINIPFAFLFHCLSSQGHLSIINRYVYLAMGGFMLAIATMGPYSSLLFLSAIKLLLLIHYIHPMHLHRWILGLQMCWQTCWHLYVQYQIYWLQEAPDSRLLLAISALMLMTQRISSLSLDFQEGTISNQSILIPFLTYSLYFPALLGGPLCSFNAFVQSVERQHTSMTSYLGNLTSKISQVIVLVWIKQLFSELLKSATFNIDSVCLDVLWIWIFSLTLRLNYYAHWKMSECVNNAAGLGVYFHKHSGQTSWDELSDGSVLVTEASSRPSVFARKWNQTTVDWLRKIVFNRTSRSPLFMTFGFSALWHGLHPGQILGFLIWAVTVQADYKLHRFSHPKLNSLWRKRLYVCVNWAFTQLTVACVVVCVELQSLASVKLLWSSCIAVFPLLSALILIIL</sequence>